<keyword id="KW-0456">Lyase</keyword>
<keyword id="KW-1185">Reference proteome</keyword>
<keyword id="KW-0819">tRNA processing</keyword>
<evidence type="ECO:0000255" key="1">
    <source>
        <dbReference type="HAMAP-Rule" id="MF_01833"/>
    </source>
</evidence>
<name>ENDA_HYPBU</name>
<organism>
    <name type="scientific">Hyperthermus butylicus (strain DSM 5456 / JCM 9403 / PLM1-5)</name>
    <dbReference type="NCBI Taxonomy" id="415426"/>
    <lineage>
        <taxon>Archaea</taxon>
        <taxon>Thermoproteota</taxon>
        <taxon>Thermoprotei</taxon>
        <taxon>Desulfurococcales</taxon>
        <taxon>Pyrodictiaceae</taxon>
        <taxon>Hyperthermus</taxon>
    </lineage>
</organism>
<gene>
    <name evidence="1" type="primary">endA</name>
    <name type="ordered locus">Hbut_0045</name>
</gene>
<sequence>MIRAVLLGLRAVVFDREAARRLYASGYYGKPLGIPKPRGSNFDAPLELGLLETLHLLERGMLEVYDEEGHRVSVEEVRRRAERFIPKFELLYKVYRDLRDRGYVVRSGLKYGSDFAVYERGPGLEHAPYLVHVMRVDEEIDPLEIVRAGRLSHSVRKAFILALTGPRDTPIRYLLLKWSKP</sequence>
<reference key="1">
    <citation type="journal article" date="2007" name="Archaea">
        <title>The genome of Hyperthermus butylicus: a sulfur-reducing, peptide fermenting, neutrophilic Crenarchaeote growing up to 108 degrees C.</title>
        <authorList>
            <person name="Bruegger K."/>
            <person name="Chen L."/>
            <person name="Stark M."/>
            <person name="Zibat A."/>
            <person name="Redder P."/>
            <person name="Ruepp A."/>
            <person name="Awayez M."/>
            <person name="She Q."/>
            <person name="Garrett R.A."/>
            <person name="Klenk H.-P."/>
        </authorList>
    </citation>
    <scope>NUCLEOTIDE SEQUENCE [LARGE SCALE GENOMIC DNA]</scope>
    <source>
        <strain>DSM 5456 / JCM 9403 / PLM1-5</strain>
    </source>
</reference>
<protein>
    <recommendedName>
        <fullName evidence="1">tRNA-splicing endonuclease</fullName>
        <ecNumber evidence="1">4.6.1.16</ecNumber>
    </recommendedName>
    <alternativeName>
        <fullName evidence="1">tRNA-intron endonuclease</fullName>
    </alternativeName>
</protein>
<dbReference type="EC" id="4.6.1.16" evidence="1"/>
<dbReference type="EMBL" id="CP000493">
    <property type="protein sequence ID" value="ABM79923.1"/>
    <property type="molecule type" value="Genomic_DNA"/>
</dbReference>
<dbReference type="RefSeq" id="WP_011821240.1">
    <property type="nucleotide sequence ID" value="NC_008818.1"/>
</dbReference>
<dbReference type="SMR" id="A2BIW2"/>
<dbReference type="STRING" id="415426.Hbut_0045"/>
<dbReference type="EnsemblBacteria" id="ABM79923">
    <property type="protein sequence ID" value="ABM79923"/>
    <property type="gene ID" value="Hbut_0045"/>
</dbReference>
<dbReference type="GeneID" id="4782745"/>
<dbReference type="KEGG" id="hbu:Hbut_0045"/>
<dbReference type="eggNOG" id="arCOG01701">
    <property type="taxonomic scope" value="Archaea"/>
</dbReference>
<dbReference type="HOGENOM" id="CLU_114393_0_0_2"/>
<dbReference type="OrthoDB" id="46045at2157"/>
<dbReference type="Proteomes" id="UP000002593">
    <property type="component" value="Chromosome"/>
</dbReference>
<dbReference type="GO" id="GO:0016829">
    <property type="term" value="F:lyase activity"/>
    <property type="evidence" value="ECO:0007669"/>
    <property type="project" value="UniProtKB-KW"/>
</dbReference>
<dbReference type="GO" id="GO:0003676">
    <property type="term" value="F:nucleic acid binding"/>
    <property type="evidence" value="ECO:0007669"/>
    <property type="project" value="InterPro"/>
</dbReference>
<dbReference type="GO" id="GO:0000213">
    <property type="term" value="F:tRNA-intron endonuclease activity"/>
    <property type="evidence" value="ECO:0007669"/>
    <property type="project" value="UniProtKB-UniRule"/>
</dbReference>
<dbReference type="GO" id="GO:0000379">
    <property type="term" value="P:tRNA-type intron splice site recognition and cleavage"/>
    <property type="evidence" value="ECO:0007669"/>
    <property type="project" value="TreeGrafter"/>
</dbReference>
<dbReference type="CDD" id="cd22363">
    <property type="entry name" value="tRNA-intron_lyase_C"/>
    <property type="match status" value="1"/>
</dbReference>
<dbReference type="FunFam" id="3.40.1350.10:FF:000006">
    <property type="entry name" value="tRNA-splicing endonuclease"/>
    <property type="match status" value="1"/>
</dbReference>
<dbReference type="Gene3D" id="3.40.1350.10">
    <property type="match status" value="1"/>
</dbReference>
<dbReference type="Gene3D" id="3.40.1170.20">
    <property type="entry name" value="tRNA intron endonuclease, N-terminal domain"/>
    <property type="match status" value="1"/>
</dbReference>
<dbReference type="HAMAP" id="MF_01833">
    <property type="entry name" value="EndA_short"/>
    <property type="match status" value="1"/>
</dbReference>
<dbReference type="InterPro" id="IPR011856">
    <property type="entry name" value="tRNA_endonuc-like_dom_sf"/>
</dbReference>
<dbReference type="InterPro" id="IPR036167">
    <property type="entry name" value="tRNA_intron_Endo_cat-like_sf"/>
</dbReference>
<dbReference type="InterPro" id="IPR006677">
    <property type="entry name" value="tRNA_intron_Endonuc_cat-like"/>
</dbReference>
<dbReference type="InterPro" id="IPR006678">
    <property type="entry name" value="tRNA_intron_Endonuc_N"/>
</dbReference>
<dbReference type="InterPro" id="IPR036740">
    <property type="entry name" value="tRNA_intron_Endonuc_N_sf"/>
</dbReference>
<dbReference type="InterPro" id="IPR006676">
    <property type="entry name" value="tRNA_splic"/>
</dbReference>
<dbReference type="InterPro" id="IPR016442">
    <property type="entry name" value="tRNA_splic_arch_short"/>
</dbReference>
<dbReference type="NCBIfam" id="TIGR00324">
    <property type="entry name" value="endA"/>
    <property type="match status" value="1"/>
</dbReference>
<dbReference type="PANTHER" id="PTHR13070:SF0">
    <property type="entry name" value="TRNA-SPLICING ENDONUCLEASE SUBUNIT SEN34"/>
    <property type="match status" value="1"/>
</dbReference>
<dbReference type="PANTHER" id="PTHR13070">
    <property type="entry name" value="TRNA-SPLICING ENDONUCLEASE SUBUNIT SEN34-RELATED"/>
    <property type="match status" value="1"/>
</dbReference>
<dbReference type="Pfam" id="PF01974">
    <property type="entry name" value="tRNA_int_endo"/>
    <property type="match status" value="1"/>
</dbReference>
<dbReference type="Pfam" id="PF02778">
    <property type="entry name" value="tRNA_int_endo_N"/>
    <property type="match status" value="1"/>
</dbReference>
<dbReference type="PIRSF" id="PIRSF005285">
    <property type="entry name" value="tRNA_splic_archaea"/>
    <property type="match status" value="1"/>
</dbReference>
<dbReference type="SUPFAM" id="SSF53032">
    <property type="entry name" value="tRNA-intron endonuclease catalytic domain-like"/>
    <property type="match status" value="1"/>
</dbReference>
<dbReference type="SUPFAM" id="SSF55267">
    <property type="entry name" value="tRNA-intron endonuclease N-terminal domain-like"/>
    <property type="match status" value="1"/>
</dbReference>
<feature type="chain" id="PRO_0000309816" description="tRNA-splicing endonuclease">
    <location>
        <begin position="1"/>
        <end position="181"/>
    </location>
</feature>
<feature type="active site" evidence="1">
    <location>
        <position position="118"/>
    </location>
</feature>
<feature type="active site" evidence="1">
    <location>
        <position position="126"/>
    </location>
</feature>
<feature type="active site" evidence="1">
    <location>
        <position position="157"/>
    </location>
</feature>
<proteinExistence type="inferred from homology"/>
<accession>A2BIW2</accession>
<comment type="function">
    <text evidence="1">Endonuclease that removes tRNA introns. Cleaves pre-tRNA at the 5'- and 3'-splice sites to release the intron. The products are an intron and two tRNA half-molecules bearing 2',3' cyclic phosphate and 5'-OH termini. Recognizes a pseudosymmetric substrate in which 2 bulged loops of 3 bases are separated by a stem of 4 bp.</text>
</comment>
<comment type="catalytic activity">
    <reaction evidence="1">
        <text>pretRNA = a 3'-half-tRNA molecule with a 5'-OH end + a 5'-half-tRNA molecule with a 2',3'-cyclic phosphate end + an intron with a 2',3'-cyclic phosphate and a 5'-hydroxyl terminus.</text>
        <dbReference type="EC" id="4.6.1.16"/>
    </reaction>
</comment>
<comment type="subunit">
    <text evidence="1">Homotetramer; although the tetramer contains four active sites, only two participate in the cleavage. Therefore, it should be considered as a dimer of dimers.</text>
</comment>
<comment type="similarity">
    <text evidence="1">Belongs to the tRNA-intron endonuclease family. Archaeal short subfamily.</text>
</comment>